<keyword id="KW-0002">3D-structure</keyword>
<keyword id="KW-0025">Alternative splicing</keyword>
<keyword id="KW-1003">Cell membrane</keyword>
<keyword id="KW-1015">Disulfide bond</keyword>
<keyword id="KW-0325">Glycoprotein</keyword>
<keyword id="KW-0472">Membrane</keyword>
<keyword id="KW-1267">Proteomics identification</keyword>
<keyword id="KW-0675">Receptor</keyword>
<keyword id="KW-1185">Reference proteome</keyword>
<keyword id="KW-0732">Signal</keyword>
<keyword id="KW-0812">Transmembrane</keyword>
<keyword id="KW-1133">Transmembrane helix</keyword>
<keyword id="KW-0813">Transport</keyword>
<sequence>MASLRVERAGGPRLPRTRVGRPAALRLLLLLGAVLNPHEALAQPLPTTGTPGSEGGTVKNYETAVQFCWNHYKDQMDPIEKDWCDWAMISRPYSTLRDCLEHFAELFDLGFPNPLAERIIFETHQIHFANCSLVQPTFSDPPEDVLLAMIIAPICLIPFLITLVVWRSKDSEAQA</sequence>
<gene>
    <name evidence="9" type="primary">RAMP2</name>
</gene>
<organism>
    <name type="scientific">Homo sapiens</name>
    <name type="common">Human</name>
    <dbReference type="NCBI Taxonomy" id="9606"/>
    <lineage>
        <taxon>Eukaryota</taxon>
        <taxon>Metazoa</taxon>
        <taxon>Chordata</taxon>
        <taxon>Craniata</taxon>
        <taxon>Vertebrata</taxon>
        <taxon>Euteleostomi</taxon>
        <taxon>Mammalia</taxon>
        <taxon>Eutheria</taxon>
        <taxon>Euarchontoglires</taxon>
        <taxon>Primates</taxon>
        <taxon>Haplorrhini</taxon>
        <taxon>Catarrhini</taxon>
        <taxon>Hominidae</taxon>
        <taxon>Homo</taxon>
    </lineage>
</organism>
<feature type="signal peptide" evidence="1">
    <location>
        <begin position="1"/>
        <end position="42"/>
    </location>
</feature>
<feature type="chain" id="PRO_0000030172" description="Receptor activity-modifying protein 2">
    <location>
        <begin position="43"/>
        <end position="175"/>
    </location>
</feature>
<feature type="topological domain" description="Extracellular" evidence="1">
    <location>
        <begin position="43"/>
        <end position="143"/>
    </location>
</feature>
<feature type="transmembrane region" description="Helical" evidence="4 10">
    <location>
        <begin position="144"/>
        <end position="165"/>
    </location>
</feature>
<feature type="topological domain" description="Cytoplasmic" evidence="1">
    <location>
        <begin position="166"/>
        <end position="175"/>
    </location>
</feature>
<feature type="site" description="Required for CALCRL interaction" evidence="4">
    <location>
        <position position="139"/>
    </location>
</feature>
<feature type="glycosylation site" description="N-linked (GlcNAc...) asparagine" evidence="1">
    <location>
        <position position="130"/>
    </location>
</feature>
<feature type="disulfide bond" evidence="4">
    <location>
        <begin position="68"/>
        <end position="99"/>
    </location>
</feature>
<feature type="disulfide bond" evidence="4">
    <location>
        <begin position="84"/>
        <end position="131"/>
    </location>
</feature>
<feature type="splice variant" id="VSP_055838" description="In isoform 2." evidence="7">
    <original>E</original>
    <variation>EASVPT</variation>
    <location>
        <position position="54"/>
    </location>
</feature>
<feature type="sequence conflict" description="In Ref. 2; ABS28868." evidence="8" ref="2">
    <original>R</original>
    <variation>C</variation>
    <location>
        <position position="13"/>
    </location>
</feature>
<feature type="sequence conflict" description="In Ref. 1; CAA04473." evidence="8" ref="1">
    <original>L</original>
    <variation>V</variation>
    <location>
        <position position="25"/>
    </location>
</feature>
<feature type="helix" evidence="15">
    <location>
        <begin position="49"/>
        <end position="54"/>
    </location>
</feature>
<feature type="helix" evidence="15">
    <location>
        <begin position="61"/>
        <end position="76"/>
    </location>
</feature>
<feature type="helix" evidence="15">
    <location>
        <begin position="77"/>
        <end position="82"/>
    </location>
</feature>
<feature type="helix" evidence="15">
    <location>
        <begin position="86"/>
        <end position="106"/>
    </location>
</feature>
<feature type="strand" evidence="17">
    <location>
        <begin position="107"/>
        <end position="109"/>
    </location>
</feature>
<feature type="helix" evidence="15">
    <location>
        <begin position="114"/>
        <end position="126"/>
    </location>
</feature>
<feature type="turn" evidence="14">
    <location>
        <begin position="127"/>
        <end position="130"/>
    </location>
</feature>
<feature type="helix" evidence="16">
    <location>
        <begin position="143"/>
        <end position="166"/>
    </location>
</feature>
<reference key="1">
    <citation type="journal article" date="1998" name="Nature">
        <title>RAMPs regulate the transport and ligand specificity of the calcitonin-receptor-like receptor.</title>
        <authorList>
            <person name="McLatchie L.M."/>
            <person name="Fraser N.J."/>
            <person name="Main M.J."/>
            <person name="Wise A."/>
            <person name="Brown J."/>
            <person name="Thompson N."/>
            <person name="Solari R."/>
            <person name="Lee M.G."/>
            <person name="Foord S.M."/>
        </authorList>
    </citation>
    <scope>NUCLEOTIDE SEQUENCE [MRNA] (ISOFORM 1)</scope>
    <scope>FUNCTION</scope>
    <scope>TISSUE SPECIFICITY</scope>
    <source>
        <tissue>Neuroblastoma</tissue>
    </source>
</reference>
<reference key="2">
    <citation type="submission" date="2007-06" db="EMBL/GenBank/DDBJ databases">
        <title>Characterization of adrenomedullin receptors and identification of a receptor activity modifying protein 2 (RAMP2) variant in SV40LT-SMC cells.</title>
        <authorList>
            <person name="Rorabaugh B.R."/>
            <person name="Witt K.M."/>
            <person name="Smith D.D."/>
            <person name="Abel P.W."/>
            <person name="Scofield M.A."/>
        </authorList>
    </citation>
    <scope>NUCLEOTIDE SEQUENCE [MRNA] (ISOFORM 2)</scope>
</reference>
<reference key="3">
    <citation type="submission" date="2003-03" db="EMBL/GenBank/DDBJ databases">
        <title>cDNA clones of human proteins involved in signal transduction sequenced by the Guthrie cDNA resource center (www.cdna.org).</title>
        <authorList>
            <person name="Kopatz S.A."/>
            <person name="Aronstam R.S."/>
            <person name="Sharma S.V."/>
        </authorList>
    </citation>
    <scope>NUCLEOTIDE SEQUENCE [LARGE SCALE MRNA] (ISOFORM 1)</scope>
    <source>
        <tissue>Heart</tissue>
    </source>
</reference>
<reference key="4">
    <citation type="journal article" date="2006" name="Nature">
        <title>DNA sequence of human chromosome 17 and analysis of rearrangement in the human lineage.</title>
        <authorList>
            <person name="Zody M.C."/>
            <person name="Garber M."/>
            <person name="Adams D.J."/>
            <person name="Sharpe T."/>
            <person name="Harrow J."/>
            <person name="Lupski J.R."/>
            <person name="Nicholson C."/>
            <person name="Searle S.M."/>
            <person name="Wilming L."/>
            <person name="Young S.K."/>
            <person name="Abouelleil A."/>
            <person name="Allen N.R."/>
            <person name="Bi W."/>
            <person name="Bloom T."/>
            <person name="Borowsky M.L."/>
            <person name="Bugalter B.E."/>
            <person name="Butler J."/>
            <person name="Chang J.L."/>
            <person name="Chen C.-K."/>
            <person name="Cook A."/>
            <person name="Corum B."/>
            <person name="Cuomo C.A."/>
            <person name="de Jong P.J."/>
            <person name="DeCaprio D."/>
            <person name="Dewar K."/>
            <person name="FitzGerald M."/>
            <person name="Gilbert J."/>
            <person name="Gibson R."/>
            <person name="Gnerre S."/>
            <person name="Goldstein S."/>
            <person name="Grafham D.V."/>
            <person name="Grocock R."/>
            <person name="Hafez N."/>
            <person name="Hagopian D.S."/>
            <person name="Hart E."/>
            <person name="Norman C.H."/>
            <person name="Humphray S."/>
            <person name="Jaffe D.B."/>
            <person name="Jones M."/>
            <person name="Kamal M."/>
            <person name="Khodiyar V.K."/>
            <person name="LaButti K."/>
            <person name="Laird G."/>
            <person name="Lehoczky J."/>
            <person name="Liu X."/>
            <person name="Lokyitsang T."/>
            <person name="Loveland J."/>
            <person name="Lui A."/>
            <person name="Macdonald P."/>
            <person name="Major J.E."/>
            <person name="Matthews L."/>
            <person name="Mauceli E."/>
            <person name="McCarroll S.A."/>
            <person name="Mihalev A.H."/>
            <person name="Mudge J."/>
            <person name="Nguyen C."/>
            <person name="Nicol R."/>
            <person name="O'Leary S.B."/>
            <person name="Osoegawa K."/>
            <person name="Schwartz D.C."/>
            <person name="Shaw-Smith C."/>
            <person name="Stankiewicz P."/>
            <person name="Steward C."/>
            <person name="Swarbreck D."/>
            <person name="Venkataraman V."/>
            <person name="Whittaker C.A."/>
            <person name="Yang X."/>
            <person name="Zimmer A.R."/>
            <person name="Bradley A."/>
            <person name="Hubbard T."/>
            <person name="Birren B.W."/>
            <person name="Rogers J."/>
            <person name="Lander E.S."/>
            <person name="Nusbaum C."/>
        </authorList>
    </citation>
    <scope>NUCLEOTIDE SEQUENCE [LARGE SCALE GENOMIC DNA]</scope>
</reference>
<reference key="5">
    <citation type="journal article" date="2004" name="Genome Res.">
        <title>The status, quality, and expansion of the NIH full-length cDNA project: the Mammalian Gene Collection (MGC).</title>
        <authorList>
            <consortium name="The MGC Project Team"/>
        </authorList>
    </citation>
    <scope>NUCLEOTIDE SEQUENCE [LARGE SCALE MRNA] (ISOFORM 1)</scope>
    <source>
        <tissue>Pancreas</tissue>
    </source>
</reference>
<reference key="6">
    <citation type="journal article" date="2018" name="J. Exp. Med.">
        <title>hCALCRL mutation causes autosomal recessive nonimmune hydrops fetalis with lymphatic dysplasia.</title>
        <authorList>
            <person name="Mackie D.I."/>
            <person name="Al Mutairi F."/>
            <person name="Davis R.B."/>
            <person name="Kechele D.O."/>
            <person name="Nielsen N.R."/>
            <person name="Snyder J.C."/>
            <person name="Caron M.G."/>
            <person name="Kliman H.J."/>
            <person name="Berg J.S."/>
            <person name="Simms J."/>
            <person name="Poyner D.R."/>
            <person name="Caron K.M."/>
        </authorList>
    </citation>
    <scope>INTERACTION WITH CALCRL</scope>
</reference>
<reference key="7">
    <citation type="submission" date="2010-12" db="PDB data bank">
        <title>Structure of the extracellular domain of human RAMP2.</title>
        <authorList>
            <consortium name="Structural genomics consortium (SGC)"/>
        </authorList>
    </citation>
    <scope>X-RAY CRYSTALLOGRAPHY (2.0 ANGSTROMS) OF 48-139</scope>
    <scope>DISULFIDE BONDS</scope>
</reference>
<reference key="8">
    <citation type="journal article" date="2012" name="Protein Sci.">
        <title>Structural basis for extracellular interactions between calcitonin receptor-like receptor and receptor activity-modifying protein 2 for adrenomedullin-specific binding.</title>
        <authorList>
            <person name="Kusano S."/>
            <person name="Kukimoto-Niino M."/>
            <person name="Hino N."/>
            <person name="Ohsawa N."/>
            <person name="Okuda K."/>
            <person name="Sakamoto K."/>
            <person name="Shirouzu M."/>
            <person name="Shindo T."/>
            <person name="Yokoyama S."/>
        </authorList>
    </citation>
    <scope>X-RAY CRYSTALLOGRAPHY (2.0 ANGSTROMS) OF 52-139 IN COMPLEX WITH CALCRL</scope>
    <scope>FUNCTION</scope>
    <scope>DISULFIDE BONDS</scope>
</reference>
<reference evidence="10" key="9">
    <citation type="journal article" date="2020" name="ACS Pharmacol. Transl. Sci.">
        <title>Structure and Dynamics of Adrenomedullin Receptors AM1 and AM2 Reveal Key Mechanisms in the Control of Receptor Phenotype by Receptor Activity-Modifying Proteins.</title>
        <authorList>
            <person name="Liang Y.L."/>
            <person name="Belousoff M.J."/>
            <person name="Fletcher M.M."/>
            <person name="Zhang X."/>
            <person name="Khoshouei M."/>
            <person name="Deganutti G."/>
            <person name="Koole C."/>
            <person name="Furness S.G.B."/>
            <person name="Miller L.J."/>
            <person name="Hay D.L."/>
            <person name="Christopoulos A."/>
            <person name="Reynolds C.A."/>
            <person name="Danev R."/>
            <person name="Wootten D."/>
            <person name="Sexton P.M."/>
        </authorList>
    </citation>
    <scope>STRUCTURE BY ELECTRON MICROSCOPY (3.00 ANGSTROMS) OF 44-175 IN COMPLEX WITH ADM; CALCRL AND G PROTEINS</scope>
    <scope>DISULFIDE BOND</scope>
    <scope>FUNCTION</scope>
    <scope>INTERACTION WITH CALCRL</scope>
    <scope>SUBCELLULAR LOCATION</scope>
</reference>
<reference evidence="11 12 13" key="10">
    <citation type="journal article" date="2022" name="Science">
        <title>A structural basis for amylin receptor phenotype.</title>
        <authorList>
            <person name="Cao J."/>
            <person name="Belousoff M.J."/>
            <person name="Liang Y.L."/>
            <person name="Johnson R.M."/>
            <person name="Josephs T.M."/>
            <person name="Fletcher M.M."/>
            <person name="Christopoulos A."/>
            <person name="Hay D.L."/>
            <person name="Danev R."/>
            <person name="Wootten D."/>
            <person name="Sexton P.M."/>
        </authorList>
    </citation>
    <scope>STRUCTURE BY ELECTRON MICROSCOPY (2.55 ANGSTROMS) OF 44-175 IN COMPLEX WITH CALCR; CALC; IAPP AND G PROTEINS</scope>
    <scope>FUNCTION</scope>
    <scope>INTERACTION WITH CALCR</scope>
</reference>
<comment type="function">
    <text evidence="2 4 5 6">Accessory protein that interacts with and modulates the function of G-protein coupled receptors including calcitonin gene-related peptide type 1 receptor (CALCRL) and calcitonin receptor (CALCR) (PubMed:9620797). Required for the transport of CALCRL to the plasma membrane (PubMed:9620797). Together with CALCRL, form a receptor complex for adrenomedullin/ADM (PubMed:22102369, PubMed:32296767, PubMed:9620797). Together with CALCR, act as a receptor complex for calcitonin/CT/CALC (PubMed:35324283). Together with CALCR, also act as a receptor complex for amylin/IAPP (PubMed:35324283).</text>
</comment>
<comment type="subunit">
    <text evidence="3 5">Heterodimer of CALCRL and RAMP2; the interaction forms the receptor complex for adrenomedullin/ADM (PubMed:30115739). Heterodimer of CALCR and RAMP2; interaction forms the AMYR2 receptor complex for calcitonin/CALC and amylin/IAPP (PubMed:35324283).</text>
</comment>
<comment type="interaction">
    <interactant intactId="EBI-9009040">
        <id>O60895</id>
    </interactant>
    <interactant intactId="EBI-962878">
        <id>Q16602</id>
        <label>CALCRL</label>
    </interactant>
    <organismsDiffer>false</organismsDiffer>
    <experiments>6</experiments>
</comment>
<comment type="interaction">
    <interactant intactId="EBI-9009040">
        <id>O60895</id>
    </interactant>
    <interactant intactId="EBI-7062247">
        <id>Q9UHD4</id>
        <label>CIDEB</label>
    </interactant>
    <organismsDiffer>false</organismsDiffer>
    <experiments>3</experiments>
</comment>
<comment type="interaction">
    <interactant intactId="EBI-9009040">
        <id>O60895</id>
    </interactant>
    <interactant intactId="EBI-11911016">
        <id>P80188</id>
        <label>LCN2</label>
    </interactant>
    <organismsDiffer>false</organismsDiffer>
    <experiments>3</experiments>
</comment>
<comment type="subcellular location">
    <subcellularLocation>
        <location evidence="4">Cell membrane</location>
        <topology evidence="4">Single-pass type I membrane protein</topology>
    </subcellularLocation>
</comment>
<comment type="alternative products">
    <event type="alternative splicing"/>
    <isoform>
        <id>O60895-1</id>
        <name>1</name>
        <sequence type="displayed"/>
    </isoform>
    <isoform>
        <id>O60895-2</id>
        <name>2</name>
        <sequence type="described" ref="VSP_055838"/>
    </isoform>
</comment>
<comment type="tissue specificity">
    <text evidence="6">Strongly expressed in lung, breast, immune system and fetal tissues.</text>
</comment>
<comment type="similarity">
    <text evidence="8">Belongs to the RAMP family.</text>
</comment>
<dbReference type="EMBL" id="AJ001015">
    <property type="protein sequence ID" value="CAA04473.1"/>
    <property type="molecule type" value="mRNA"/>
</dbReference>
<dbReference type="EMBL" id="EF687002">
    <property type="protein sequence ID" value="ABS28868.1"/>
    <property type="molecule type" value="mRNA"/>
</dbReference>
<dbReference type="EMBL" id="AY265458">
    <property type="protein sequence ID" value="AAP23299.1"/>
    <property type="molecule type" value="mRNA"/>
</dbReference>
<dbReference type="EMBL" id="AC100793">
    <property type="status" value="NOT_ANNOTATED_CDS"/>
    <property type="molecule type" value="Genomic_DNA"/>
</dbReference>
<dbReference type="EMBL" id="BC027975">
    <property type="protein sequence ID" value="AAH27975.1"/>
    <property type="molecule type" value="mRNA"/>
</dbReference>
<dbReference type="CCDS" id="CCDS11437.1">
    <molecule id="O60895-1"/>
</dbReference>
<dbReference type="RefSeq" id="NP_005845.2">
    <molecule id="O60895-1"/>
    <property type="nucleotide sequence ID" value="NM_005854.3"/>
</dbReference>
<dbReference type="PDB" id="2XVT">
    <property type="method" value="X-ray"/>
    <property type="resolution" value="2.05 A"/>
    <property type="chains" value="A/B/C/D/E/F=48-139"/>
</dbReference>
<dbReference type="PDB" id="3AQE">
    <property type="method" value="X-ray"/>
    <property type="resolution" value="2.00 A"/>
    <property type="chains" value="A/B/C/D/E/F=56-139"/>
</dbReference>
<dbReference type="PDB" id="3AQF">
    <property type="method" value="X-ray"/>
    <property type="resolution" value="2.60 A"/>
    <property type="chains" value="A=56-139"/>
</dbReference>
<dbReference type="PDB" id="4RWF">
    <property type="method" value="X-ray"/>
    <property type="resolution" value="1.76 A"/>
    <property type="chains" value="A=55-138"/>
</dbReference>
<dbReference type="PDB" id="6UUN">
    <property type="method" value="EM"/>
    <property type="resolution" value="3.00 A"/>
    <property type="chains" value="E=44-175"/>
</dbReference>
<dbReference type="PDB" id="6V2E">
    <property type="method" value="X-ray"/>
    <property type="resolution" value="1.83 A"/>
    <property type="chains" value="A=55-140"/>
</dbReference>
<dbReference type="PDB" id="7TYH">
    <property type="method" value="EM"/>
    <property type="resolution" value="3.30 A"/>
    <property type="chains" value="E=44-175"/>
</dbReference>
<dbReference type="PDB" id="7TYX">
    <property type="method" value="EM"/>
    <property type="resolution" value="2.55 A"/>
    <property type="chains" value="E=44-175"/>
</dbReference>
<dbReference type="PDB" id="7TYY">
    <property type="method" value="EM"/>
    <property type="resolution" value="3.00 A"/>
    <property type="chains" value="E=44-175"/>
</dbReference>
<dbReference type="PDBsum" id="2XVT"/>
<dbReference type="PDBsum" id="3AQE"/>
<dbReference type="PDBsum" id="3AQF"/>
<dbReference type="PDBsum" id="4RWF"/>
<dbReference type="PDBsum" id="6UUN"/>
<dbReference type="PDBsum" id="6V2E"/>
<dbReference type="PDBsum" id="7TYH"/>
<dbReference type="PDBsum" id="7TYX"/>
<dbReference type="PDBsum" id="7TYY"/>
<dbReference type="EMDB" id="EMD-20883"/>
<dbReference type="EMDB" id="EMD-26179"/>
<dbReference type="EMDB" id="EMD-26197"/>
<dbReference type="EMDB" id="EMD-26199"/>
<dbReference type="SMR" id="O60895"/>
<dbReference type="BioGRID" id="115557">
    <property type="interactions" value="107"/>
</dbReference>
<dbReference type="ComplexPortal" id="CPX-2191">
    <property type="entry name" value="Adrenomedullin receptor AM1 complex"/>
</dbReference>
<dbReference type="ComplexPortal" id="CPX-3186">
    <property type="entry name" value="Amylin receptor 2 complex"/>
</dbReference>
<dbReference type="CORUM" id="O60895"/>
<dbReference type="FunCoup" id="O60895">
    <property type="interactions" value="152"/>
</dbReference>
<dbReference type="IntAct" id="O60895">
    <property type="interactions" value="74"/>
</dbReference>
<dbReference type="STRING" id="9606.ENSP00000253796"/>
<dbReference type="BindingDB" id="O60895"/>
<dbReference type="ChEMBL" id="CHEMBL2109232"/>
<dbReference type="ChEMBL" id="CHEMBL2364173"/>
<dbReference type="DrugBank" id="DB01278">
    <property type="generic name" value="Pramlintide"/>
</dbReference>
<dbReference type="DrugCentral" id="O60895"/>
<dbReference type="GuidetoPHARMACOLOGY" id="52"/>
<dbReference type="TCDB" id="8.A.127.1.2">
    <property type="family name" value="the receptor activity-modifying protein (ramp) family"/>
</dbReference>
<dbReference type="GlyCosmos" id="O60895">
    <property type="glycosylation" value="1 site, No reported glycans"/>
</dbReference>
<dbReference type="GlyGen" id="O60895">
    <property type="glycosylation" value="3 sites"/>
</dbReference>
<dbReference type="PhosphoSitePlus" id="O60895"/>
<dbReference type="BioMuta" id="RAMP2"/>
<dbReference type="MassIVE" id="O60895"/>
<dbReference type="PaxDb" id="9606-ENSP00000253796"/>
<dbReference type="PeptideAtlas" id="O60895"/>
<dbReference type="ProteomicsDB" id="49658">
    <molecule id="O60895-1"/>
</dbReference>
<dbReference type="Antibodypedia" id="29403">
    <property type="antibodies" value="290 antibodies from 32 providers"/>
</dbReference>
<dbReference type="DNASU" id="10266"/>
<dbReference type="Ensembl" id="ENST00000253796.10">
    <molecule id="O60895-1"/>
    <property type="protein sequence ID" value="ENSP00000253796.3"/>
    <property type="gene ID" value="ENSG00000131477.11"/>
</dbReference>
<dbReference type="Ensembl" id="ENST00000587142.5">
    <molecule id="O60895-2"/>
    <property type="protein sequence ID" value="ENSP00000466455.1"/>
    <property type="gene ID" value="ENSG00000131477.11"/>
</dbReference>
<dbReference type="GeneID" id="10266"/>
<dbReference type="KEGG" id="hsa:10266"/>
<dbReference type="MANE-Select" id="ENST00000253796.10">
    <property type="protein sequence ID" value="ENSP00000253796.3"/>
    <property type="RefSeq nucleotide sequence ID" value="NM_005854.3"/>
    <property type="RefSeq protein sequence ID" value="NP_005845.2"/>
</dbReference>
<dbReference type="UCSC" id="uc002ibg.5">
    <molecule id="O60895-1"/>
    <property type="organism name" value="human"/>
</dbReference>
<dbReference type="AGR" id="HGNC:9844"/>
<dbReference type="CTD" id="10266"/>
<dbReference type="DisGeNET" id="10266"/>
<dbReference type="GeneCards" id="RAMP2"/>
<dbReference type="HGNC" id="HGNC:9844">
    <property type="gene designation" value="RAMP2"/>
</dbReference>
<dbReference type="HPA" id="ENSG00000131477">
    <property type="expression patterns" value="Low tissue specificity"/>
</dbReference>
<dbReference type="MIM" id="605154">
    <property type="type" value="gene"/>
</dbReference>
<dbReference type="neXtProt" id="NX_O60895"/>
<dbReference type="OpenTargets" id="ENSG00000131477"/>
<dbReference type="PharmGKB" id="PA34203"/>
<dbReference type="VEuPathDB" id="HostDB:ENSG00000131477"/>
<dbReference type="eggNOG" id="ENOG502S5WC">
    <property type="taxonomic scope" value="Eukaryota"/>
</dbReference>
<dbReference type="GeneTree" id="ENSGT00940000160264"/>
<dbReference type="InParanoid" id="O60895"/>
<dbReference type="OMA" id="WCDWAVI"/>
<dbReference type="OrthoDB" id="9416539at2759"/>
<dbReference type="PAN-GO" id="O60895">
    <property type="GO annotations" value="10 GO annotations based on evolutionary models"/>
</dbReference>
<dbReference type="PhylomeDB" id="O60895"/>
<dbReference type="TreeFam" id="TF333286"/>
<dbReference type="PathwayCommons" id="O60895"/>
<dbReference type="Reactome" id="R-HSA-418555">
    <property type="pathway name" value="G alpha (s) signalling events"/>
</dbReference>
<dbReference type="Reactome" id="R-HSA-419812">
    <property type="pathway name" value="Calcitonin-like ligand receptors"/>
</dbReference>
<dbReference type="Reactome" id="R-HSA-9856530">
    <property type="pathway name" value="High laminar flow shear stress activates signaling by PIEZO1 and PECAM1:CDH5:KDR in endothelial cells"/>
</dbReference>
<dbReference type="SignaLink" id="O60895"/>
<dbReference type="BioGRID-ORCS" id="10266">
    <property type="hits" value="17 hits in 1157 CRISPR screens"/>
</dbReference>
<dbReference type="ChiTaRS" id="RAMP2">
    <property type="organism name" value="human"/>
</dbReference>
<dbReference type="EvolutionaryTrace" id="O60895"/>
<dbReference type="GeneWiki" id="RAMP2"/>
<dbReference type="GenomeRNAi" id="10266"/>
<dbReference type="Pharos" id="O60895">
    <property type="development level" value="Tclin"/>
</dbReference>
<dbReference type="PRO" id="PR:O60895"/>
<dbReference type="Proteomes" id="UP000005640">
    <property type="component" value="Chromosome 17"/>
</dbReference>
<dbReference type="RNAct" id="O60895">
    <property type="molecule type" value="protein"/>
</dbReference>
<dbReference type="Bgee" id="ENSG00000131477">
    <property type="expression patterns" value="Expressed in right lung and 138 other cell types or tissues"/>
</dbReference>
<dbReference type="ExpressionAtlas" id="O60895">
    <property type="expression patterns" value="baseline and differential"/>
</dbReference>
<dbReference type="GO" id="GO:1903143">
    <property type="term" value="C:adrenomedullin receptor complex"/>
    <property type="evidence" value="ECO:0000314"/>
    <property type="project" value="UniProtKB"/>
</dbReference>
<dbReference type="GO" id="GO:0009986">
    <property type="term" value="C:cell surface"/>
    <property type="evidence" value="ECO:0000314"/>
    <property type="project" value="UniProtKB"/>
</dbReference>
<dbReference type="GO" id="GO:0005905">
    <property type="term" value="C:clathrin-coated pit"/>
    <property type="evidence" value="ECO:0000304"/>
    <property type="project" value="ProtInc"/>
</dbReference>
<dbReference type="GO" id="GO:0005737">
    <property type="term" value="C:cytoplasm"/>
    <property type="evidence" value="ECO:0000314"/>
    <property type="project" value="UniProtKB"/>
</dbReference>
<dbReference type="GO" id="GO:0005764">
    <property type="term" value="C:lysosome"/>
    <property type="evidence" value="ECO:0000304"/>
    <property type="project" value="ProtInc"/>
</dbReference>
<dbReference type="GO" id="GO:0005886">
    <property type="term" value="C:plasma membrane"/>
    <property type="evidence" value="ECO:0000304"/>
    <property type="project" value="Reactome"/>
</dbReference>
<dbReference type="GO" id="GO:0043235">
    <property type="term" value="C:receptor complex"/>
    <property type="evidence" value="ECO:0000314"/>
    <property type="project" value="UniProtKB"/>
</dbReference>
<dbReference type="GO" id="GO:1990409">
    <property type="term" value="F:adrenomedullin binding"/>
    <property type="evidence" value="ECO:0000353"/>
    <property type="project" value="UniProtKB"/>
</dbReference>
<dbReference type="GO" id="GO:0001605">
    <property type="term" value="F:adrenomedullin receptor activity"/>
    <property type="evidence" value="ECO:0000353"/>
    <property type="project" value="UniProtKB"/>
</dbReference>
<dbReference type="GO" id="GO:0015026">
    <property type="term" value="F:coreceptor activity"/>
    <property type="evidence" value="ECO:0000314"/>
    <property type="project" value="UniProt"/>
</dbReference>
<dbReference type="GO" id="GO:0007189">
    <property type="term" value="P:adenylate cyclase-activating G protein-coupled receptor signaling pathway"/>
    <property type="evidence" value="ECO:0000353"/>
    <property type="project" value="UniProtKB"/>
</dbReference>
<dbReference type="GO" id="GO:0034333">
    <property type="term" value="P:adherens junction assembly"/>
    <property type="evidence" value="ECO:0000314"/>
    <property type="project" value="UniProtKB"/>
</dbReference>
<dbReference type="GO" id="GO:1990410">
    <property type="term" value="P:adrenomedullin receptor signaling pathway"/>
    <property type="evidence" value="ECO:0000314"/>
    <property type="project" value="UniProt"/>
</dbReference>
<dbReference type="GO" id="GO:0150060">
    <property type="term" value="P:amylin receptor 2 signaling pathway"/>
    <property type="evidence" value="ECO:0000314"/>
    <property type="project" value="UniProt"/>
</dbReference>
<dbReference type="GO" id="GO:0001525">
    <property type="term" value="P:angiogenesis"/>
    <property type="evidence" value="ECO:0000314"/>
    <property type="project" value="UniProtKB"/>
</dbReference>
<dbReference type="GO" id="GO:0070831">
    <property type="term" value="P:basement membrane assembly"/>
    <property type="evidence" value="ECO:0000250"/>
    <property type="project" value="UniProtKB"/>
</dbReference>
<dbReference type="GO" id="GO:0070830">
    <property type="term" value="P:bicellular tight junction assembly"/>
    <property type="evidence" value="ECO:0000314"/>
    <property type="project" value="UniProtKB"/>
</dbReference>
<dbReference type="GO" id="GO:0006816">
    <property type="term" value="P:calcium ion transport"/>
    <property type="evidence" value="ECO:0000314"/>
    <property type="project" value="UniProtKB"/>
</dbReference>
<dbReference type="GO" id="GO:0032870">
    <property type="term" value="P:cellular response to hormone stimulus"/>
    <property type="evidence" value="ECO:0000318"/>
    <property type="project" value="GO_Central"/>
</dbReference>
<dbReference type="GO" id="GO:0035924">
    <property type="term" value="P:cellular response to vascular endothelial growth factor stimulus"/>
    <property type="evidence" value="ECO:0000250"/>
    <property type="project" value="UniProtKB"/>
</dbReference>
<dbReference type="GO" id="GO:0007186">
    <property type="term" value="P:G protein-coupled receptor signaling pathway"/>
    <property type="evidence" value="ECO:0000318"/>
    <property type="project" value="GO_Central"/>
</dbReference>
<dbReference type="GO" id="GO:0007507">
    <property type="term" value="P:heart development"/>
    <property type="evidence" value="ECO:0000250"/>
    <property type="project" value="UniProtKB"/>
</dbReference>
<dbReference type="GO" id="GO:0006886">
    <property type="term" value="P:intracellular protein transport"/>
    <property type="evidence" value="ECO:0007669"/>
    <property type="project" value="InterPro"/>
</dbReference>
<dbReference type="GO" id="GO:2000352">
    <property type="term" value="P:negative regulation of endothelial cell apoptotic process"/>
    <property type="evidence" value="ECO:0000314"/>
    <property type="project" value="UniProtKB"/>
</dbReference>
<dbReference type="GO" id="GO:0043116">
    <property type="term" value="P:negative regulation of vascular permeability"/>
    <property type="evidence" value="ECO:0000314"/>
    <property type="project" value="UniProtKB"/>
</dbReference>
<dbReference type="GO" id="GO:0045766">
    <property type="term" value="P:positive regulation of angiogenesis"/>
    <property type="evidence" value="ECO:0000250"/>
    <property type="project" value="UniProtKB"/>
</dbReference>
<dbReference type="GO" id="GO:0010628">
    <property type="term" value="P:positive regulation of gene expression"/>
    <property type="evidence" value="ECO:0000314"/>
    <property type="project" value="UniProtKB"/>
</dbReference>
<dbReference type="GO" id="GO:2001214">
    <property type="term" value="P:positive regulation of vasculogenesis"/>
    <property type="evidence" value="ECO:0007669"/>
    <property type="project" value="Ensembl"/>
</dbReference>
<dbReference type="GO" id="GO:0072659">
    <property type="term" value="P:protein localization to plasma membrane"/>
    <property type="evidence" value="ECO:0000314"/>
    <property type="project" value="UniProtKB"/>
</dbReference>
<dbReference type="GO" id="GO:0015031">
    <property type="term" value="P:protein transport"/>
    <property type="evidence" value="ECO:0000314"/>
    <property type="project" value="UniProtKB"/>
</dbReference>
<dbReference type="GO" id="GO:0031623">
    <property type="term" value="P:receptor internalization"/>
    <property type="evidence" value="ECO:0000314"/>
    <property type="project" value="UniProtKB"/>
</dbReference>
<dbReference type="GO" id="GO:0008217">
    <property type="term" value="P:regulation of blood pressure"/>
    <property type="evidence" value="ECO:0000250"/>
    <property type="project" value="UniProtKB"/>
</dbReference>
<dbReference type="GO" id="GO:0008277">
    <property type="term" value="P:regulation of G protein-coupled receptor signaling pathway"/>
    <property type="evidence" value="ECO:0007669"/>
    <property type="project" value="InterPro"/>
</dbReference>
<dbReference type="GO" id="GO:0002040">
    <property type="term" value="P:sprouting angiogenesis"/>
    <property type="evidence" value="ECO:0000250"/>
    <property type="project" value="UniProtKB"/>
</dbReference>
<dbReference type="GO" id="GO:0097084">
    <property type="term" value="P:vascular associated smooth muscle cell development"/>
    <property type="evidence" value="ECO:0000250"/>
    <property type="project" value="UniProtKB"/>
</dbReference>
<dbReference type="GO" id="GO:0001570">
    <property type="term" value="P:vasculogenesis"/>
    <property type="evidence" value="ECO:0000315"/>
    <property type="project" value="UniProtKB"/>
</dbReference>
<dbReference type="FunFam" id="1.10.150.510:FF:000003">
    <property type="entry name" value="Receptor activity-modifying protein 2"/>
    <property type="match status" value="1"/>
</dbReference>
<dbReference type="Gene3D" id="1.10.150.510">
    <property type="entry name" value="Receptor activity modifying family"/>
    <property type="match status" value="1"/>
</dbReference>
<dbReference type="InterPro" id="IPR006985">
    <property type="entry name" value="RAMP"/>
</dbReference>
<dbReference type="InterPro" id="IPR038126">
    <property type="entry name" value="RAMP_sf"/>
</dbReference>
<dbReference type="PANTHER" id="PTHR14076">
    <property type="entry name" value="RECEPTOR ACTIVITY MODIFYING PROTEIN RAMP"/>
    <property type="match status" value="1"/>
</dbReference>
<dbReference type="PANTHER" id="PTHR14076:SF9">
    <property type="entry name" value="RECEPTOR ACTIVITY-MODIFYING PROTEIN 2"/>
    <property type="match status" value="1"/>
</dbReference>
<dbReference type="Pfam" id="PF04901">
    <property type="entry name" value="RAMP"/>
    <property type="match status" value="1"/>
</dbReference>
<evidence type="ECO:0000255" key="1"/>
<evidence type="ECO:0000269" key="2">
    <source>
    </source>
</evidence>
<evidence type="ECO:0000269" key="3">
    <source>
    </source>
</evidence>
<evidence type="ECO:0000269" key="4">
    <source>
    </source>
</evidence>
<evidence type="ECO:0000269" key="5">
    <source>
    </source>
</evidence>
<evidence type="ECO:0000269" key="6">
    <source>
    </source>
</evidence>
<evidence type="ECO:0000303" key="7">
    <source ref="2"/>
</evidence>
<evidence type="ECO:0000305" key="8"/>
<evidence type="ECO:0000312" key="9">
    <source>
        <dbReference type="HGNC" id="HGNC:9844"/>
    </source>
</evidence>
<evidence type="ECO:0007744" key="10">
    <source>
        <dbReference type="PDB" id="6UUN"/>
    </source>
</evidence>
<evidence type="ECO:0007744" key="11">
    <source>
        <dbReference type="PDB" id="7TYH"/>
    </source>
</evidence>
<evidence type="ECO:0007744" key="12">
    <source>
        <dbReference type="PDB" id="7TYX"/>
    </source>
</evidence>
<evidence type="ECO:0007744" key="13">
    <source>
        <dbReference type="PDB" id="7TYY"/>
    </source>
</evidence>
<evidence type="ECO:0007829" key="14">
    <source>
        <dbReference type="PDB" id="3AQE"/>
    </source>
</evidence>
<evidence type="ECO:0007829" key="15">
    <source>
        <dbReference type="PDB" id="4RWF"/>
    </source>
</evidence>
<evidence type="ECO:0007829" key="16">
    <source>
        <dbReference type="PDB" id="7TYX"/>
    </source>
</evidence>
<evidence type="ECO:0007829" key="17">
    <source>
        <dbReference type="PDB" id="7TYY"/>
    </source>
</evidence>
<name>RAMP2_HUMAN</name>
<protein>
    <recommendedName>
        <fullName>Receptor activity-modifying protein 2</fullName>
    </recommendedName>
    <alternativeName>
        <fullName>Calcitonin-receptor-like receptor activity-modifying protein 2</fullName>
        <shortName>CRLR activity-modifying protein 2</shortName>
    </alternativeName>
</protein>
<accession>O60895</accession>
<accession>A7L9S6</accession>
<accession>K7EMD3</accession>
<accession>Q8N1F2</accession>
<proteinExistence type="evidence at protein level"/>